<organism>
    <name type="scientific">Saccharopolyspora erythraea (strain ATCC 11635 / DSM 40517 / JCM 4748 / NBRC 13426 / NCIMB 8594 / NRRL 2338)</name>
    <dbReference type="NCBI Taxonomy" id="405948"/>
    <lineage>
        <taxon>Bacteria</taxon>
        <taxon>Bacillati</taxon>
        <taxon>Actinomycetota</taxon>
        <taxon>Actinomycetes</taxon>
        <taxon>Pseudonocardiales</taxon>
        <taxon>Pseudonocardiaceae</taxon>
        <taxon>Saccharopolyspora</taxon>
    </lineage>
</organism>
<dbReference type="EMBL" id="AM420293">
    <property type="protein sequence ID" value="CAM05991.1"/>
    <property type="molecule type" value="Genomic_DNA"/>
</dbReference>
<dbReference type="RefSeq" id="WP_011875169.1">
    <property type="nucleotide sequence ID" value="NC_009142.1"/>
</dbReference>
<dbReference type="SMR" id="A4FPL6"/>
<dbReference type="STRING" id="405948.SACE_6827"/>
<dbReference type="KEGG" id="sen:SACE_6827"/>
<dbReference type="eggNOG" id="COG0186">
    <property type="taxonomic scope" value="Bacteria"/>
</dbReference>
<dbReference type="HOGENOM" id="CLU_073626_1_0_11"/>
<dbReference type="OrthoDB" id="9811714at2"/>
<dbReference type="Proteomes" id="UP000006728">
    <property type="component" value="Chromosome"/>
</dbReference>
<dbReference type="GO" id="GO:0022627">
    <property type="term" value="C:cytosolic small ribosomal subunit"/>
    <property type="evidence" value="ECO:0007669"/>
    <property type="project" value="TreeGrafter"/>
</dbReference>
<dbReference type="GO" id="GO:0019843">
    <property type="term" value="F:rRNA binding"/>
    <property type="evidence" value="ECO:0007669"/>
    <property type="project" value="UniProtKB-UniRule"/>
</dbReference>
<dbReference type="GO" id="GO:0003735">
    <property type="term" value="F:structural constituent of ribosome"/>
    <property type="evidence" value="ECO:0007669"/>
    <property type="project" value="InterPro"/>
</dbReference>
<dbReference type="GO" id="GO:0006412">
    <property type="term" value="P:translation"/>
    <property type="evidence" value="ECO:0007669"/>
    <property type="project" value="UniProtKB-UniRule"/>
</dbReference>
<dbReference type="CDD" id="cd00364">
    <property type="entry name" value="Ribosomal_uS17"/>
    <property type="match status" value="1"/>
</dbReference>
<dbReference type="Gene3D" id="2.40.50.140">
    <property type="entry name" value="Nucleic acid-binding proteins"/>
    <property type="match status" value="1"/>
</dbReference>
<dbReference type="HAMAP" id="MF_01345_B">
    <property type="entry name" value="Ribosomal_uS17_B"/>
    <property type="match status" value="1"/>
</dbReference>
<dbReference type="InterPro" id="IPR012340">
    <property type="entry name" value="NA-bd_OB-fold"/>
</dbReference>
<dbReference type="InterPro" id="IPR000266">
    <property type="entry name" value="Ribosomal_uS17"/>
</dbReference>
<dbReference type="InterPro" id="IPR019984">
    <property type="entry name" value="Ribosomal_uS17_bact/chlr"/>
</dbReference>
<dbReference type="InterPro" id="IPR019979">
    <property type="entry name" value="Ribosomal_uS17_CS"/>
</dbReference>
<dbReference type="NCBIfam" id="NF004123">
    <property type="entry name" value="PRK05610.1"/>
    <property type="match status" value="1"/>
</dbReference>
<dbReference type="NCBIfam" id="TIGR03635">
    <property type="entry name" value="uS17_bact"/>
    <property type="match status" value="1"/>
</dbReference>
<dbReference type="PANTHER" id="PTHR10744">
    <property type="entry name" value="40S RIBOSOMAL PROTEIN S11 FAMILY MEMBER"/>
    <property type="match status" value="1"/>
</dbReference>
<dbReference type="PANTHER" id="PTHR10744:SF1">
    <property type="entry name" value="SMALL RIBOSOMAL SUBUNIT PROTEIN US17M"/>
    <property type="match status" value="1"/>
</dbReference>
<dbReference type="Pfam" id="PF00366">
    <property type="entry name" value="Ribosomal_S17"/>
    <property type="match status" value="1"/>
</dbReference>
<dbReference type="PRINTS" id="PR00973">
    <property type="entry name" value="RIBOSOMALS17"/>
</dbReference>
<dbReference type="SUPFAM" id="SSF50249">
    <property type="entry name" value="Nucleic acid-binding proteins"/>
    <property type="match status" value="1"/>
</dbReference>
<dbReference type="PROSITE" id="PS00056">
    <property type="entry name" value="RIBOSOMAL_S17"/>
    <property type="match status" value="1"/>
</dbReference>
<evidence type="ECO:0000255" key="1">
    <source>
        <dbReference type="HAMAP-Rule" id="MF_01345"/>
    </source>
</evidence>
<evidence type="ECO:0000305" key="2"/>
<name>RS17_SACEN</name>
<accession>A4FPL6</accession>
<protein>
    <recommendedName>
        <fullName evidence="1">Small ribosomal subunit protein uS17</fullName>
    </recommendedName>
    <alternativeName>
        <fullName evidence="2">30S ribosomal protein S17</fullName>
    </alternativeName>
</protein>
<sequence length="91" mass="10283">MSDGGQGVTRNTRKVREGYVVSDKMDKTIVVSLEDRKKHALYGKVMRRNTKVKAHDEANTAGVGDRVLLMETRPLSASKRWRLVEVVEKAK</sequence>
<reference key="1">
    <citation type="journal article" date="2007" name="Nat. Biotechnol.">
        <title>Complete genome sequence of the erythromycin-producing bacterium Saccharopolyspora erythraea NRRL23338.</title>
        <authorList>
            <person name="Oliynyk M."/>
            <person name="Samborskyy M."/>
            <person name="Lester J.B."/>
            <person name="Mironenko T."/>
            <person name="Scott N."/>
            <person name="Dickens S."/>
            <person name="Haydock S.F."/>
            <person name="Leadlay P.F."/>
        </authorList>
    </citation>
    <scope>NUCLEOTIDE SEQUENCE [LARGE SCALE GENOMIC DNA]</scope>
    <source>
        <strain>ATCC 11635 / DSM 40517 / JCM 4748 / NBRC 13426 / NCIMB 8594 / NRRL 2338</strain>
    </source>
</reference>
<feature type="chain" id="PRO_1000055014" description="Small ribosomal subunit protein uS17">
    <location>
        <begin position="1"/>
        <end position="91"/>
    </location>
</feature>
<keyword id="KW-1185">Reference proteome</keyword>
<keyword id="KW-0687">Ribonucleoprotein</keyword>
<keyword id="KW-0689">Ribosomal protein</keyword>
<keyword id="KW-0694">RNA-binding</keyword>
<keyword id="KW-0699">rRNA-binding</keyword>
<comment type="function">
    <text evidence="1">One of the primary rRNA binding proteins, it binds specifically to the 5'-end of 16S ribosomal RNA.</text>
</comment>
<comment type="subunit">
    <text evidence="1">Part of the 30S ribosomal subunit.</text>
</comment>
<comment type="similarity">
    <text evidence="1">Belongs to the universal ribosomal protein uS17 family.</text>
</comment>
<proteinExistence type="inferred from homology"/>
<gene>
    <name evidence="1" type="primary">rpsQ</name>
    <name type="ordered locus">SACE_6827</name>
</gene>